<keyword id="KW-0997">Cell inner membrane</keyword>
<keyword id="KW-1003">Cell membrane</keyword>
<keyword id="KW-0472">Membrane</keyword>
<keyword id="KW-0812">Transmembrane</keyword>
<keyword id="KW-1133">Transmembrane helix</keyword>
<keyword id="KW-0813">Transport</keyword>
<sequence>MSADSADSVPSPRSAFATTLQIVSVVSFTFICYLTIGLPLAVLPGFVHDELGFSAIVAGAAISVQYFATLASRPLAGRCADTLGPKRTVLRGLAACGASGALLLSAFAFARWPAASIGLLVASRLVLGIGESLVGTGAILWGIGRVGTAHNARVISWNGIATYGALAIGAPVGVAISHALIPAVLGMLVIALAALGYYLARLITPVPLVHGERMSYASVLTRVLPHGLGLALGSAGFGSIATFITLYYAARHWPNAALSLTVFGTLFIGARLLFANTIKTHGGFRVAIVSFAFECAGLLMLWLAPVPHVALVGAALTGFGFALIFPALGVEAVALVPPASRGAALSAYSVFLDLSLGITGPLAGYVAGAFGYPQVFLCAAVAAAAGVALSTVLYQRQARLSGSGAAA</sequence>
<gene>
    <name type="ordered locus">BURPS668_3162</name>
</gene>
<dbReference type="EMBL" id="CP000570">
    <property type="protein sequence ID" value="ABN81837.1"/>
    <property type="molecule type" value="Genomic_DNA"/>
</dbReference>
<dbReference type="RefSeq" id="WP_004185668.1">
    <property type="nucleotide sequence ID" value="NC_009074.1"/>
</dbReference>
<dbReference type="SMR" id="A3NCV3"/>
<dbReference type="KEGG" id="bpd:BURPS668_3162"/>
<dbReference type="HOGENOM" id="CLU_001265_10_3_4"/>
<dbReference type="GO" id="GO:0005886">
    <property type="term" value="C:plasma membrane"/>
    <property type="evidence" value="ECO:0007669"/>
    <property type="project" value="UniProtKB-SubCell"/>
</dbReference>
<dbReference type="GO" id="GO:0022857">
    <property type="term" value="F:transmembrane transporter activity"/>
    <property type="evidence" value="ECO:0007669"/>
    <property type="project" value="UniProtKB-UniRule"/>
</dbReference>
<dbReference type="CDD" id="cd17489">
    <property type="entry name" value="MFS_YfcJ_like"/>
    <property type="match status" value="1"/>
</dbReference>
<dbReference type="Gene3D" id="1.20.1250.20">
    <property type="entry name" value="MFS general substrate transporter like domains"/>
    <property type="match status" value="1"/>
</dbReference>
<dbReference type="HAMAP" id="MF_01118">
    <property type="entry name" value="MFS_YhhS"/>
    <property type="match status" value="1"/>
</dbReference>
<dbReference type="InterPro" id="IPR011701">
    <property type="entry name" value="MFS"/>
</dbReference>
<dbReference type="InterPro" id="IPR020846">
    <property type="entry name" value="MFS_dom"/>
</dbReference>
<dbReference type="InterPro" id="IPR036259">
    <property type="entry name" value="MFS_trans_sf"/>
</dbReference>
<dbReference type="InterPro" id="IPR050171">
    <property type="entry name" value="MFS_Transporters"/>
</dbReference>
<dbReference type="InterPro" id="IPR023008">
    <property type="entry name" value="MFS_YhhS-like"/>
</dbReference>
<dbReference type="NCBIfam" id="NF003477">
    <property type="entry name" value="PRK05122.1"/>
    <property type="match status" value="1"/>
</dbReference>
<dbReference type="NCBIfam" id="NF009048">
    <property type="entry name" value="PRK12382.1"/>
    <property type="match status" value="1"/>
</dbReference>
<dbReference type="PANTHER" id="PTHR23517:SF13">
    <property type="entry name" value="MAJOR FACILITATOR SUPERFAMILY MFS_1"/>
    <property type="match status" value="1"/>
</dbReference>
<dbReference type="PANTHER" id="PTHR23517">
    <property type="entry name" value="RESISTANCE PROTEIN MDTM, PUTATIVE-RELATED-RELATED"/>
    <property type="match status" value="1"/>
</dbReference>
<dbReference type="Pfam" id="PF07690">
    <property type="entry name" value="MFS_1"/>
    <property type="match status" value="1"/>
</dbReference>
<dbReference type="SUPFAM" id="SSF103473">
    <property type="entry name" value="MFS general substrate transporter"/>
    <property type="match status" value="1"/>
</dbReference>
<dbReference type="PROSITE" id="PS50850">
    <property type="entry name" value="MFS"/>
    <property type="match status" value="1"/>
</dbReference>
<evidence type="ECO:0000255" key="1">
    <source>
        <dbReference type="HAMAP-Rule" id="MF_01118"/>
    </source>
</evidence>
<protein>
    <recommendedName>
        <fullName evidence="1">Uncharacterized MFS-type transporter BURPS668_3162</fullName>
    </recommendedName>
</protein>
<accession>A3NCV3</accession>
<organism>
    <name type="scientific">Burkholderia pseudomallei (strain 668)</name>
    <dbReference type="NCBI Taxonomy" id="320373"/>
    <lineage>
        <taxon>Bacteria</taxon>
        <taxon>Pseudomonadati</taxon>
        <taxon>Pseudomonadota</taxon>
        <taxon>Betaproteobacteria</taxon>
        <taxon>Burkholderiales</taxon>
        <taxon>Burkholderiaceae</taxon>
        <taxon>Burkholderia</taxon>
        <taxon>pseudomallei group</taxon>
    </lineage>
</organism>
<reference key="1">
    <citation type="journal article" date="2010" name="Genome Biol. Evol.">
        <title>Continuing evolution of Burkholderia mallei through genome reduction and large-scale rearrangements.</title>
        <authorList>
            <person name="Losada L."/>
            <person name="Ronning C.M."/>
            <person name="DeShazer D."/>
            <person name="Woods D."/>
            <person name="Fedorova N."/>
            <person name="Kim H.S."/>
            <person name="Shabalina S.A."/>
            <person name="Pearson T.R."/>
            <person name="Brinkac L."/>
            <person name="Tan P."/>
            <person name="Nandi T."/>
            <person name="Crabtree J."/>
            <person name="Badger J."/>
            <person name="Beckstrom-Sternberg S."/>
            <person name="Saqib M."/>
            <person name="Schutzer S.E."/>
            <person name="Keim P."/>
            <person name="Nierman W.C."/>
        </authorList>
    </citation>
    <scope>NUCLEOTIDE SEQUENCE [LARGE SCALE GENOMIC DNA]</scope>
    <source>
        <strain>668</strain>
    </source>
</reference>
<comment type="subcellular location">
    <subcellularLocation>
        <location evidence="1">Cell inner membrane</location>
        <topology evidence="1">Multi-pass membrane protein</topology>
    </subcellularLocation>
</comment>
<comment type="similarity">
    <text evidence="1">Belongs to the major facilitator superfamily. YhhS family.</text>
</comment>
<feature type="chain" id="PRO_1000137233" description="Uncharacterized MFS-type transporter BURPS668_3162">
    <location>
        <begin position="1"/>
        <end position="407"/>
    </location>
</feature>
<feature type="transmembrane region" description="Helical" evidence="1">
    <location>
        <begin position="22"/>
        <end position="42"/>
    </location>
</feature>
<feature type="transmembrane region" description="Helical" evidence="1">
    <location>
        <begin position="51"/>
        <end position="71"/>
    </location>
</feature>
<feature type="transmembrane region" description="Helical" evidence="1">
    <location>
        <begin position="101"/>
        <end position="121"/>
    </location>
</feature>
<feature type="transmembrane region" description="Helical" evidence="1">
    <location>
        <begin position="126"/>
        <end position="146"/>
    </location>
</feature>
<feature type="transmembrane region" description="Helical" evidence="1">
    <location>
        <begin position="154"/>
        <end position="174"/>
    </location>
</feature>
<feature type="transmembrane region" description="Helical" evidence="1">
    <location>
        <begin position="179"/>
        <end position="199"/>
    </location>
</feature>
<feature type="transmembrane region" description="Helical" evidence="1">
    <location>
        <begin position="227"/>
        <end position="247"/>
    </location>
</feature>
<feature type="transmembrane region" description="Helical" evidence="1">
    <location>
        <begin position="258"/>
        <end position="278"/>
    </location>
</feature>
<feature type="transmembrane region" description="Helical" evidence="1">
    <location>
        <begin position="286"/>
        <end position="306"/>
    </location>
</feature>
<feature type="transmembrane region" description="Helical" evidence="1">
    <location>
        <begin position="309"/>
        <end position="329"/>
    </location>
</feature>
<feature type="transmembrane region" description="Helical" evidence="1">
    <location>
        <begin position="347"/>
        <end position="367"/>
    </location>
</feature>
<feature type="transmembrane region" description="Helical" evidence="1">
    <location>
        <begin position="369"/>
        <end position="389"/>
    </location>
</feature>
<name>Y3162_BURP6</name>
<proteinExistence type="inferred from homology"/>